<accession>B7HGT7</accession>
<protein>
    <recommendedName>
        <fullName evidence="1">UPF0736 protein BCB4264_A1231</fullName>
    </recommendedName>
</protein>
<name>Y1231_BACC4</name>
<organism>
    <name type="scientific">Bacillus cereus (strain B4264)</name>
    <dbReference type="NCBI Taxonomy" id="405532"/>
    <lineage>
        <taxon>Bacteria</taxon>
        <taxon>Bacillati</taxon>
        <taxon>Bacillota</taxon>
        <taxon>Bacilli</taxon>
        <taxon>Bacillales</taxon>
        <taxon>Bacillaceae</taxon>
        <taxon>Bacillus</taxon>
        <taxon>Bacillus cereus group</taxon>
    </lineage>
</organism>
<evidence type="ECO:0000255" key="1">
    <source>
        <dbReference type="HAMAP-Rule" id="MF_01860"/>
    </source>
</evidence>
<comment type="similarity">
    <text evidence="1">Belongs to the UPF0736 family.</text>
</comment>
<gene>
    <name type="ordered locus">BCB4264_A1231</name>
</gene>
<proteinExistence type="inferred from homology"/>
<reference key="1">
    <citation type="submission" date="2008-10" db="EMBL/GenBank/DDBJ databases">
        <title>Genome sequence of Bacillus cereus B4264.</title>
        <authorList>
            <person name="Dodson R.J."/>
            <person name="Durkin A.S."/>
            <person name="Rosovitz M.J."/>
            <person name="Rasko D.A."/>
            <person name="Hoffmaster A."/>
            <person name="Ravel J."/>
            <person name="Sutton G."/>
        </authorList>
    </citation>
    <scope>NUCLEOTIDE SEQUENCE [LARGE SCALE GENOMIC DNA]</scope>
    <source>
        <strain>B4264</strain>
    </source>
</reference>
<sequence length="248" mass="30024">MLYLHDVWVNWFEGEENGYNVCHFYEWRKDDTIELLDQVPLLKVDATLYHYIENELLELPQKMLEDVHHKAYIRKNHERLQQEYCFVVTDGKGIIAIDTIGYNVPIRKSRLIPRQEQMVYEMVENVQAEKYEFQVEETEKEHHILSPSPFIMNGLTRKERQLKQLLFMALDQLHTTKNTAEIRYWFTEWDPSAYGMVQHMEFEDIWAKLYDEAKTGWSDKHEQLCERLVKGQPFFEKLWEMENEQKVN</sequence>
<feature type="chain" id="PRO_0000369140" description="UPF0736 protein BCB4264_A1231">
    <location>
        <begin position="1"/>
        <end position="248"/>
    </location>
</feature>
<dbReference type="EMBL" id="CP001176">
    <property type="protein sequence ID" value="ACK61759.1"/>
    <property type="molecule type" value="Genomic_DNA"/>
</dbReference>
<dbReference type="RefSeq" id="WP_000966127.1">
    <property type="nucleotide sequence ID" value="NZ_VEHB01000003.1"/>
</dbReference>
<dbReference type="SMR" id="B7HGT7"/>
<dbReference type="KEGG" id="bcb:BCB4264_A1231"/>
<dbReference type="HOGENOM" id="CLU_1101152_0_0_9"/>
<dbReference type="Proteomes" id="UP000007096">
    <property type="component" value="Chromosome"/>
</dbReference>
<dbReference type="HAMAP" id="MF_01860">
    <property type="entry name" value="UPF0736"/>
    <property type="match status" value="1"/>
</dbReference>
<dbReference type="InterPro" id="IPR020909">
    <property type="entry name" value="UPF0736"/>
</dbReference>
<dbReference type="Pfam" id="PF12227">
    <property type="entry name" value="DUF3603"/>
    <property type="match status" value="1"/>
</dbReference>